<dbReference type="EC" id="2.7.10.2"/>
<dbReference type="EMBL" id="AP004799">
    <property type="protein sequence ID" value="BAD10095.1"/>
    <property type="molecule type" value="Genomic_DNA"/>
</dbReference>
<dbReference type="EMBL" id="AP008208">
    <property type="protein sequence ID" value="BAF07730.2"/>
    <property type="status" value="ALT_SEQ"/>
    <property type="molecule type" value="Genomic_DNA"/>
</dbReference>
<dbReference type="EMBL" id="AP014958">
    <property type="protein sequence ID" value="BAS76855.1"/>
    <property type="molecule type" value="Genomic_DNA"/>
</dbReference>
<dbReference type="RefSeq" id="XP_015626457.1">
    <property type="nucleotide sequence ID" value="XM_015770971.1"/>
</dbReference>
<dbReference type="SMR" id="Q6Z829"/>
<dbReference type="FunCoup" id="Q6Z829">
    <property type="interactions" value="680"/>
</dbReference>
<dbReference type="STRING" id="39947.Q6Z829"/>
<dbReference type="PaxDb" id="39947-Q6Z829"/>
<dbReference type="EnsemblPlants" id="Os02t0135300-00">
    <property type="protein sequence ID" value="Os02t0135300-00"/>
    <property type="gene ID" value="Os02g0135300"/>
</dbReference>
<dbReference type="Gramene" id="Os02t0135300-00">
    <property type="protein sequence ID" value="Os02t0135300-00"/>
    <property type="gene ID" value="Os02g0135300"/>
</dbReference>
<dbReference type="KEGG" id="dosa:Os02g0135300"/>
<dbReference type="eggNOG" id="KOG0601">
    <property type="taxonomic scope" value="Eukaryota"/>
</dbReference>
<dbReference type="HOGENOM" id="CLU_000288_25_0_1"/>
<dbReference type="InParanoid" id="Q6Z829"/>
<dbReference type="OMA" id="SKDHSPC"/>
<dbReference type="OrthoDB" id="5337378at2759"/>
<dbReference type="Proteomes" id="UP000000763">
    <property type="component" value="Chromosome 2"/>
</dbReference>
<dbReference type="Proteomes" id="UP000059680">
    <property type="component" value="Chromosome 2"/>
</dbReference>
<dbReference type="GO" id="GO:0005737">
    <property type="term" value="C:cytoplasm"/>
    <property type="evidence" value="ECO:0000318"/>
    <property type="project" value="GO_Central"/>
</dbReference>
<dbReference type="GO" id="GO:0005634">
    <property type="term" value="C:nucleus"/>
    <property type="evidence" value="ECO:0000318"/>
    <property type="project" value="GO_Central"/>
</dbReference>
<dbReference type="GO" id="GO:0005524">
    <property type="term" value="F:ATP binding"/>
    <property type="evidence" value="ECO:0007669"/>
    <property type="project" value="UniProtKB-KW"/>
</dbReference>
<dbReference type="GO" id="GO:0046872">
    <property type="term" value="F:metal ion binding"/>
    <property type="evidence" value="ECO:0007669"/>
    <property type="project" value="UniProtKB-KW"/>
</dbReference>
<dbReference type="GO" id="GO:0004715">
    <property type="term" value="F:non-membrane spanning protein tyrosine kinase activity"/>
    <property type="evidence" value="ECO:0007669"/>
    <property type="project" value="UniProtKB-EC"/>
</dbReference>
<dbReference type="GO" id="GO:0004713">
    <property type="term" value="F:protein tyrosine kinase activity"/>
    <property type="evidence" value="ECO:0000318"/>
    <property type="project" value="GO_Central"/>
</dbReference>
<dbReference type="GO" id="GO:1902750">
    <property type="term" value="P:negative regulation of cell cycle G2/M phase transition"/>
    <property type="evidence" value="ECO:0007669"/>
    <property type="project" value="EnsemblPlants"/>
</dbReference>
<dbReference type="FunFam" id="3.30.200.20:FF:000356">
    <property type="entry name" value="WEE protein kinase"/>
    <property type="match status" value="1"/>
</dbReference>
<dbReference type="FunFam" id="1.10.510.10:FF:000531">
    <property type="entry name" value="Wee1-like protein kinase"/>
    <property type="match status" value="1"/>
</dbReference>
<dbReference type="Gene3D" id="3.30.200.20">
    <property type="entry name" value="Phosphorylase Kinase, domain 1"/>
    <property type="match status" value="1"/>
</dbReference>
<dbReference type="Gene3D" id="1.10.510.10">
    <property type="entry name" value="Transferase(Phosphotransferase) domain 1"/>
    <property type="match status" value="1"/>
</dbReference>
<dbReference type="InterPro" id="IPR050339">
    <property type="entry name" value="CC_SR_Kinase"/>
</dbReference>
<dbReference type="InterPro" id="IPR011009">
    <property type="entry name" value="Kinase-like_dom_sf"/>
</dbReference>
<dbReference type="InterPro" id="IPR000719">
    <property type="entry name" value="Prot_kinase_dom"/>
</dbReference>
<dbReference type="InterPro" id="IPR017441">
    <property type="entry name" value="Protein_kinase_ATP_BS"/>
</dbReference>
<dbReference type="InterPro" id="IPR008271">
    <property type="entry name" value="Ser/Thr_kinase_AS"/>
</dbReference>
<dbReference type="PANTHER" id="PTHR11042">
    <property type="entry name" value="EUKARYOTIC TRANSLATION INITIATION FACTOR 2-ALPHA KINASE EIF2-ALPHA KINASE -RELATED"/>
    <property type="match status" value="1"/>
</dbReference>
<dbReference type="PANTHER" id="PTHR11042:SF185">
    <property type="entry name" value="WEE1-LIKE PROTEIN KINASE"/>
    <property type="match status" value="1"/>
</dbReference>
<dbReference type="Pfam" id="PF00069">
    <property type="entry name" value="Pkinase"/>
    <property type="match status" value="1"/>
</dbReference>
<dbReference type="SMART" id="SM00220">
    <property type="entry name" value="S_TKc"/>
    <property type="match status" value="1"/>
</dbReference>
<dbReference type="SUPFAM" id="SSF56112">
    <property type="entry name" value="Protein kinase-like (PK-like)"/>
    <property type="match status" value="1"/>
</dbReference>
<dbReference type="PROSITE" id="PS00107">
    <property type="entry name" value="PROTEIN_KINASE_ATP"/>
    <property type="match status" value="1"/>
</dbReference>
<dbReference type="PROSITE" id="PS50011">
    <property type="entry name" value="PROTEIN_KINASE_DOM"/>
    <property type="match status" value="1"/>
</dbReference>
<dbReference type="PROSITE" id="PS00108">
    <property type="entry name" value="PROTEIN_KINASE_ST"/>
    <property type="match status" value="1"/>
</dbReference>
<organism>
    <name type="scientific">Oryza sativa subsp. japonica</name>
    <name type="common">Rice</name>
    <dbReference type="NCBI Taxonomy" id="39947"/>
    <lineage>
        <taxon>Eukaryota</taxon>
        <taxon>Viridiplantae</taxon>
        <taxon>Streptophyta</taxon>
        <taxon>Embryophyta</taxon>
        <taxon>Tracheophyta</taxon>
        <taxon>Spermatophyta</taxon>
        <taxon>Magnoliopsida</taxon>
        <taxon>Liliopsida</taxon>
        <taxon>Poales</taxon>
        <taxon>Poaceae</taxon>
        <taxon>BOP clade</taxon>
        <taxon>Oryzoideae</taxon>
        <taxon>Oryzeae</taxon>
        <taxon>Oryzinae</taxon>
        <taxon>Oryza</taxon>
        <taxon>Oryza sativa</taxon>
    </lineage>
</organism>
<sequence length="520" mass="58391">MLRTKTPRPRGGKSRRATAAAGKEREREREREREGRSPSGELSLQLEHVSLFSFLADAPREGAAAARTPFTPFEELLEGSCDPDPTPPPPLPPLQPQATPMDADEVVEEKDSGILSQDFFCTPDYITPDAPQLGSGFDANKENIPCPNSPEKSVCRSKRYKRDCSPKGLGSNDIFDSQWIAPVQFEGLDDSEEEQLKESSSHKRGSYVSQSAVALRCRVMPPPCIRNPYLNTDHQIDDNVFGGRQCKSSGFSPSVDGDGLSRYRTDFHEIEQIGRGNFSVVFKVLKRIDGCLYAVKRSIRQLHNDRERRQAVKEVQALAALGCHENIVGYFTSWFENKQLFIQMELCDRCLSMDRNQPLKCGEALELLYQICKGLDFIHERGIAHLDVKPDNIYVRNGVYKLGDFGCATLIDRSLAIEDGDSRYMPPEMLNDKYEHLDKVDIFSLGAAIYELIRGTQLPDSGPQFTSLREGKIALLPGCPMQFQSLIKSMMDPDPVRRPSAKEVLRHPIFDKLHKAPAKK</sequence>
<name>WEE1_ORYSJ</name>
<comment type="catalytic activity">
    <reaction evidence="3">
        <text>L-tyrosyl-[protein] + ATP = O-phospho-L-tyrosyl-[protein] + ADP + H(+)</text>
        <dbReference type="Rhea" id="RHEA:10596"/>
        <dbReference type="Rhea" id="RHEA-COMP:10136"/>
        <dbReference type="Rhea" id="RHEA-COMP:20101"/>
        <dbReference type="ChEBI" id="CHEBI:15378"/>
        <dbReference type="ChEBI" id="CHEBI:30616"/>
        <dbReference type="ChEBI" id="CHEBI:46858"/>
        <dbReference type="ChEBI" id="CHEBI:61978"/>
        <dbReference type="ChEBI" id="CHEBI:456216"/>
        <dbReference type="EC" id="2.7.10.2"/>
    </reaction>
</comment>
<comment type="similarity">
    <text evidence="2">Belongs to the protein kinase superfamily. Ser/Thr protein kinase family. WEE1 subfamily.</text>
</comment>
<comment type="sequence caution" evidence="5">
    <conflict type="erroneous gene model prediction">
        <sequence resource="EMBL-CDS" id="BAF07730"/>
    </conflict>
</comment>
<accession>Q6Z829</accession>
<accession>A0A0P0VED2</accession>
<accession>Q0E458</accession>
<feature type="chain" id="PRO_0000295673" description="Wee1-like protein kinase">
    <location>
        <begin position="1"/>
        <end position="520"/>
    </location>
</feature>
<feature type="domain" description="Protein kinase" evidence="2">
    <location>
        <begin position="267"/>
        <end position="510"/>
    </location>
</feature>
<feature type="region of interest" description="Disordered" evidence="4">
    <location>
        <begin position="1"/>
        <end position="43"/>
    </location>
</feature>
<feature type="region of interest" description="Disordered" evidence="4">
    <location>
        <begin position="61"/>
        <end position="103"/>
    </location>
</feature>
<feature type="compositionally biased region" description="Basic residues" evidence="4">
    <location>
        <begin position="1"/>
        <end position="16"/>
    </location>
</feature>
<feature type="compositionally biased region" description="Basic and acidic residues" evidence="4">
    <location>
        <begin position="22"/>
        <end position="36"/>
    </location>
</feature>
<feature type="compositionally biased region" description="Pro residues" evidence="4">
    <location>
        <begin position="84"/>
        <end position="95"/>
    </location>
</feature>
<feature type="active site" description="Proton acceptor" evidence="2 3">
    <location>
        <position position="387"/>
    </location>
</feature>
<feature type="binding site" evidence="2">
    <location>
        <begin position="273"/>
        <end position="281"/>
    </location>
    <ligand>
        <name>ATP</name>
        <dbReference type="ChEBI" id="CHEBI:30616"/>
    </ligand>
</feature>
<feature type="binding site" evidence="2">
    <location>
        <position position="296"/>
    </location>
    <ligand>
        <name>ATP</name>
        <dbReference type="ChEBI" id="CHEBI:30616"/>
    </ligand>
</feature>
<feature type="binding site" evidence="1">
    <location>
        <position position="392"/>
    </location>
    <ligand>
        <name>Mg(2+)</name>
        <dbReference type="ChEBI" id="CHEBI:18420"/>
    </ligand>
</feature>
<feature type="binding site" evidence="1">
    <location>
        <position position="404"/>
    </location>
    <ligand>
        <name>Mg(2+)</name>
        <dbReference type="ChEBI" id="CHEBI:18420"/>
    </ligand>
</feature>
<keyword id="KW-0067">ATP-binding</keyword>
<keyword id="KW-0418">Kinase</keyword>
<keyword id="KW-0460">Magnesium</keyword>
<keyword id="KW-0479">Metal-binding</keyword>
<keyword id="KW-0547">Nucleotide-binding</keyword>
<keyword id="KW-0597">Phosphoprotein</keyword>
<keyword id="KW-1185">Reference proteome</keyword>
<keyword id="KW-0808">Transferase</keyword>
<keyword id="KW-0829">Tyrosine-protein kinase</keyword>
<proteinExistence type="inferred from homology"/>
<reference key="1">
    <citation type="journal article" date="2005" name="Nature">
        <title>The map-based sequence of the rice genome.</title>
        <authorList>
            <consortium name="International rice genome sequencing project (IRGSP)"/>
        </authorList>
    </citation>
    <scope>NUCLEOTIDE SEQUENCE [LARGE SCALE GENOMIC DNA]</scope>
    <source>
        <strain>cv. Nipponbare</strain>
    </source>
</reference>
<reference key="2">
    <citation type="journal article" date="2008" name="Nucleic Acids Res.">
        <title>The rice annotation project database (RAP-DB): 2008 update.</title>
        <authorList>
            <consortium name="The rice annotation project (RAP)"/>
        </authorList>
    </citation>
    <scope>GENOME REANNOTATION</scope>
    <source>
        <strain>cv. Nipponbare</strain>
    </source>
</reference>
<reference key="3">
    <citation type="journal article" date="2013" name="Rice">
        <title>Improvement of the Oryza sativa Nipponbare reference genome using next generation sequence and optical map data.</title>
        <authorList>
            <person name="Kawahara Y."/>
            <person name="de la Bastide M."/>
            <person name="Hamilton J.P."/>
            <person name="Kanamori H."/>
            <person name="McCombie W.R."/>
            <person name="Ouyang S."/>
            <person name="Schwartz D.C."/>
            <person name="Tanaka T."/>
            <person name="Wu J."/>
            <person name="Zhou S."/>
            <person name="Childs K.L."/>
            <person name="Davidson R.M."/>
            <person name="Lin H."/>
            <person name="Quesada-Ocampo L."/>
            <person name="Vaillancourt B."/>
            <person name="Sakai H."/>
            <person name="Lee S.S."/>
            <person name="Kim J."/>
            <person name="Numa H."/>
            <person name="Itoh T."/>
            <person name="Buell C.R."/>
            <person name="Matsumoto T."/>
        </authorList>
    </citation>
    <scope>GENOME REANNOTATION</scope>
    <source>
        <strain>cv. Nipponbare</strain>
    </source>
</reference>
<reference key="4">
    <citation type="journal article" date="2007" name="Plant Mol. Biol.">
        <title>Genome-wide identification and expression analysis of rice cell cycle genes.</title>
        <authorList>
            <person name="Guo J."/>
            <person name="Song J."/>
            <person name="Wang F."/>
            <person name="Zhang X.S."/>
        </authorList>
    </citation>
    <scope>GENE FAMILY</scope>
</reference>
<gene>
    <name type="primary">WEE1</name>
    <name type="ordered locus">Os02g0135300</name>
    <name type="ordered locus">LOC_Os02g04240</name>
    <name type="ORF">P0585B01.27</name>
</gene>
<protein>
    <recommendedName>
        <fullName>Wee1-like protein kinase</fullName>
        <ecNumber>2.7.10.2</ecNumber>
    </recommendedName>
</protein>
<evidence type="ECO:0000250" key="1"/>
<evidence type="ECO:0000255" key="2">
    <source>
        <dbReference type="PROSITE-ProRule" id="PRU00159"/>
    </source>
</evidence>
<evidence type="ECO:0000255" key="3">
    <source>
        <dbReference type="PROSITE-ProRule" id="PRU10027"/>
    </source>
</evidence>
<evidence type="ECO:0000256" key="4">
    <source>
        <dbReference type="SAM" id="MobiDB-lite"/>
    </source>
</evidence>
<evidence type="ECO:0000305" key="5"/>